<sequence>MLQYALVFFVIALIAAIFGFGGIAAGAVEIAKILFFIFLVVALVAAVMGLVRRGR</sequence>
<comment type="subcellular location">
    <subcellularLocation>
        <location evidence="1">Cell membrane</location>
        <topology evidence="1">Multi-pass membrane protein</topology>
    </subcellularLocation>
</comment>
<comment type="similarity">
    <text evidence="1">Belongs to the UPF0391 family.</text>
</comment>
<proteinExistence type="inferred from homology"/>
<gene>
    <name type="ordered locus">RALTA_A0099</name>
</gene>
<protein>
    <recommendedName>
        <fullName evidence="1">UPF0391 membrane protein RALTA_A0099</fullName>
    </recommendedName>
</protein>
<accession>B2AG73</accession>
<dbReference type="EMBL" id="CU633749">
    <property type="protein sequence ID" value="CAP62772.1"/>
    <property type="molecule type" value="Genomic_DNA"/>
</dbReference>
<dbReference type="RefSeq" id="WP_010812883.1">
    <property type="nucleotide sequence ID" value="NC_010528.1"/>
</dbReference>
<dbReference type="KEGG" id="cti:RALTA_A0099"/>
<dbReference type="eggNOG" id="COG5487">
    <property type="taxonomic scope" value="Bacteria"/>
</dbReference>
<dbReference type="HOGENOM" id="CLU_187346_0_1_4"/>
<dbReference type="BioCyc" id="CTAI977880:RALTA_RS28950-MONOMER"/>
<dbReference type="Proteomes" id="UP000001692">
    <property type="component" value="Chromosome 1"/>
</dbReference>
<dbReference type="GO" id="GO:0005886">
    <property type="term" value="C:plasma membrane"/>
    <property type="evidence" value="ECO:0007669"/>
    <property type="project" value="UniProtKB-SubCell"/>
</dbReference>
<dbReference type="HAMAP" id="MF_01361">
    <property type="entry name" value="UPF0391"/>
    <property type="match status" value="1"/>
</dbReference>
<dbReference type="InterPro" id="IPR009760">
    <property type="entry name" value="DUF1328"/>
</dbReference>
<dbReference type="NCBIfam" id="NF010226">
    <property type="entry name" value="PRK13682.1-1"/>
    <property type="match status" value="1"/>
</dbReference>
<dbReference type="NCBIfam" id="NF010229">
    <property type="entry name" value="PRK13682.1-4"/>
    <property type="match status" value="1"/>
</dbReference>
<dbReference type="Pfam" id="PF07043">
    <property type="entry name" value="DUF1328"/>
    <property type="match status" value="1"/>
</dbReference>
<dbReference type="PIRSF" id="PIRSF036466">
    <property type="entry name" value="UCP036466"/>
    <property type="match status" value="1"/>
</dbReference>
<feature type="chain" id="PRO_1000143709" description="UPF0391 membrane protein RALTA_A0099">
    <location>
        <begin position="1"/>
        <end position="55"/>
    </location>
</feature>
<feature type="transmembrane region" description="Helical" evidence="1">
    <location>
        <begin position="5"/>
        <end position="25"/>
    </location>
</feature>
<feature type="transmembrane region" description="Helical" evidence="1">
    <location>
        <begin position="30"/>
        <end position="50"/>
    </location>
</feature>
<organism>
    <name type="scientific">Cupriavidus taiwanensis (strain DSM 17343 / BCRC 17206 / CCUG 44338 / CIP 107171 / LMG 19424 / R1)</name>
    <name type="common">Ralstonia taiwanensis (strain LMG 19424)</name>
    <dbReference type="NCBI Taxonomy" id="977880"/>
    <lineage>
        <taxon>Bacteria</taxon>
        <taxon>Pseudomonadati</taxon>
        <taxon>Pseudomonadota</taxon>
        <taxon>Betaproteobacteria</taxon>
        <taxon>Burkholderiales</taxon>
        <taxon>Burkholderiaceae</taxon>
        <taxon>Cupriavidus</taxon>
    </lineage>
</organism>
<keyword id="KW-1003">Cell membrane</keyword>
<keyword id="KW-0472">Membrane</keyword>
<keyword id="KW-0812">Transmembrane</keyword>
<keyword id="KW-1133">Transmembrane helix</keyword>
<name>Y099_CUPTR</name>
<evidence type="ECO:0000255" key="1">
    <source>
        <dbReference type="HAMAP-Rule" id="MF_01361"/>
    </source>
</evidence>
<reference key="1">
    <citation type="journal article" date="2008" name="Genome Res.">
        <title>Genome sequence of the beta-rhizobium Cupriavidus taiwanensis and comparative genomics of rhizobia.</title>
        <authorList>
            <person name="Amadou C."/>
            <person name="Pascal G."/>
            <person name="Mangenot S."/>
            <person name="Glew M."/>
            <person name="Bontemps C."/>
            <person name="Capela D."/>
            <person name="Carrere S."/>
            <person name="Cruveiller S."/>
            <person name="Dossat C."/>
            <person name="Lajus A."/>
            <person name="Marchetti M."/>
            <person name="Poinsot V."/>
            <person name="Rouy Z."/>
            <person name="Servin B."/>
            <person name="Saad M."/>
            <person name="Schenowitz C."/>
            <person name="Barbe V."/>
            <person name="Batut J."/>
            <person name="Medigue C."/>
            <person name="Masson-Boivin C."/>
        </authorList>
    </citation>
    <scope>NUCLEOTIDE SEQUENCE [LARGE SCALE GENOMIC DNA]</scope>
    <source>
        <strain>DSM 17343 / BCRC 17206 / CCUG 44338 / CIP 107171 / LMG 19424 / R1</strain>
    </source>
</reference>